<name>GCST_CHLL3</name>
<proteinExistence type="inferred from homology"/>
<comment type="function">
    <text evidence="1">The glycine cleavage system catalyzes the degradation of glycine.</text>
</comment>
<comment type="catalytic activity">
    <reaction evidence="1">
        <text>N(6)-[(R)-S(8)-aminomethyldihydrolipoyl]-L-lysyl-[protein] + (6S)-5,6,7,8-tetrahydrofolate = N(6)-[(R)-dihydrolipoyl]-L-lysyl-[protein] + (6R)-5,10-methylene-5,6,7,8-tetrahydrofolate + NH4(+)</text>
        <dbReference type="Rhea" id="RHEA:16945"/>
        <dbReference type="Rhea" id="RHEA-COMP:10475"/>
        <dbReference type="Rhea" id="RHEA-COMP:10492"/>
        <dbReference type="ChEBI" id="CHEBI:15636"/>
        <dbReference type="ChEBI" id="CHEBI:28938"/>
        <dbReference type="ChEBI" id="CHEBI:57453"/>
        <dbReference type="ChEBI" id="CHEBI:83100"/>
        <dbReference type="ChEBI" id="CHEBI:83143"/>
        <dbReference type="EC" id="2.1.2.10"/>
    </reaction>
</comment>
<comment type="subunit">
    <text evidence="1">The glycine cleavage system is composed of four proteins: P, T, L and H.</text>
</comment>
<comment type="similarity">
    <text evidence="1">Belongs to the GcvT family.</text>
</comment>
<sequence>MKKTALYPWHEKAGARIIDFGGWLMPVQYSGIIAEHRAVRSAAGLFDVSHMGNFYVKGPRAEEFLQHMTTNDLSRAKNGQAQYNVMLYPNGGIVDDLIIYRIDAQTFFIIVNAGNCEKDYQWLQEHAAEYDGVVLEDHSSAMSLIALQGPKAFDILKKVLPSLDAPSLGSFHFCTLEYSGAELMVARTGYTGEIGVEICMPNEMALPLWEDLLEAGRPEGILPIGLGARDTLRLEMGYSLYGHEIDQDTNPLEARLKWVVKLDKGHFIGREACLQVELNPKRSVAGFVLEGRALPRQGCKLFNSDHQEIGRVCSGTLSPTLQEPVGTCSLLREYQKPGTRVFVEIRGTMQPGTIRPLPFVKTSLS</sequence>
<dbReference type="EC" id="2.1.2.10" evidence="1"/>
<dbReference type="EMBL" id="CP000096">
    <property type="protein sequence ID" value="ABB23284.1"/>
    <property type="molecule type" value="Genomic_DNA"/>
</dbReference>
<dbReference type="RefSeq" id="WP_011357159.1">
    <property type="nucleotide sequence ID" value="NC_007512.1"/>
</dbReference>
<dbReference type="SMR" id="Q3B5U7"/>
<dbReference type="STRING" id="319225.Plut_0396"/>
<dbReference type="KEGG" id="plt:Plut_0396"/>
<dbReference type="eggNOG" id="COG0404">
    <property type="taxonomic scope" value="Bacteria"/>
</dbReference>
<dbReference type="HOGENOM" id="CLU_007884_10_2_10"/>
<dbReference type="OrthoDB" id="9774591at2"/>
<dbReference type="Proteomes" id="UP000002709">
    <property type="component" value="Chromosome"/>
</dbReference>
<dbReference type="GO" id="GO:0005829">
    <property type="term" value="C:cytosol"/>
    <property type="evidence" value="ECO:0007669"/>
    <property type="project" value="TreeGrafter"/>
</dbReference>
<dbReference type="GO" id="GO:0005960">
    <property type="term" value="C:glycine cleavage complex"/>
    <property type="evidence" value="ECO:0007669"/>
    <property type="project" value="InterPro"/>
</dbReference>
<dbReference type="GO" id="GO:0004047">
    <property type="term" value="F:aminomethyltransferase activity"/>
    <property type="evidence" value="ECO:0007669"/>
    <property type="project" value="UniProtKB-UniRule"/>
</dbReference>
<dbReference type="GO" id="GO:0008483">
    <property type="term" value="F:transaminase activity"/>
    <property type="evidence" value="ECO:0007669"/>
    <property type="project" value="UniProtKB-KW"/>
</dbReference>
<dbReference type="GO" id="GO:0019464">
    <property type="term" value="P:glycine decarboxylation via glycine cleavage system"/>
    <property type="evidence" value="ECO:0007669"/>
    <property type="project" value="UniProtKB-UniRule"/>
</dbReference>
<dbReference type="FunFam" id="3.30.70.1400:FF:000001">
    <property type="entry name" value="Aminomethyltransferase"/>
    <property type="match status" value="1"/>
</dbReference>
<dbReference type="FunFam" id="4.10.1250.10:FF:000001">
    <property type="entry name" value="Aminomethyltransferase"/>
    <property type="match status" value="1"/>
</dbReference>
<dbReference type="Gene3D" id="2.40.30.110">
    <property type="entry name" value="Aminomethyltransferase beta-barrel domains"/>
    <property type="match status" value="1"/>
</dbReference>
<dbReference type="Gene3D" id="3.30.70.1400">
    <property type="entry name" value="Aminomethyltransferase beta-barrel domains"/>
    <property type="match status" value="1"/>
</dbReference>
<dbReference type="Gene3D" id="4.10.1250.10">
    <property type="entry name" value="Aminomethyltransferase fragment"/>
    <property type="match status" value="1"/>
</dbReference>
<dbReference type="Gene3D" id="3.30.1360.120">
    <property type="entry name" value="Probable tRNA modification gtpase trme, domain 1"/>
    <property type="match status" value="1"/>
</dbReference>
<dbReference type="HAMAP" id="MF_00259">
    <property type="entry name" value="GcvT"/>
    <property type="match status" value="1"/>
</dbReference>
<dbReference type="InterPro" id="IPR006223">
    <property type="entry name" value="GCS_T"/>
</dbReference>
<dbReference type="InterPro" id="IPR022903">
    <property type="entry name" value="GCS_T_bac"/>
</dbReference>
<dbReference type="InterPro" id="IPR013977">
    <property type="entry name" value="GCST_C"/>
</dbReference>
<dbReference type="InterPro" id="IPR006222">
    <property type="entry name" value="GCV_T_N"/>
</dbReference>
<dbReference type="InterPro" id="IPR028896">
    <property type="entry name" value="GcvT/YgfZ/DmdA"/>
</dbReference>
<dbReference type="InterPro" id="IPR029043">
    <property type="entry name" value="GcvT/YgfZ_C"/>
</dbReference>
<dbReference type="InterPro" id="IPR027266">
    <property type="entry name" value="TrmE/GcvT_dom1"/>
</dbReference>
<dbReference type="NCBIfam" id="TIGR00528">
    <property type="entry name" value="gcvT"/>
    <property type="match status" value="1"/>
</dbReference>
<dbReference type="NCBIfam" id="NF001567">
    <property type="entry name" value="PRK00389.1"/>
    <property type="match status" value="1"/>
</dbReference>
<dbReference type="PANTHER" id="PTHR43757">
    <property type="entry name" value="AMINOMETHYLTRANSFERASE"/>
    <property type="match status" value="1"/>
</dbReference>
<dbReference type="PANTHER" id="PTHR43757:SF2">
    <property type="entry name" value="AMINOMETHYLTRANSFERASE, MITOCHONDRIAL"/>
    <property type="match status" value="1"/>
</dbReference>
<dbReference type="Pfam" id="PF01571">
    <property type="entry name" value="GCV_T"/>
    <property type="match status" value="1"/>
</dbReference>
<dbReference type="Pfam" id="PF08669">
    <property type="entry name" value="GCV_T_C"/>
    <property type="match status" value="1"/>
</dbReference>
<dbReference type="PIRSF" id="PIRSF006487">
    <property type="entry name" value="GcvT"/>
    <property type="match status" value="1"/>
</dbReference>
<dbReference type="SUPFAM" id="SSF101790">
    <property type="entry name" value="Aminomethyltransferase beta-barrel domain"/>
    <property type="match status" value="1"/>
</dbReference>
<dbReference type="SUPFAM" id="SSF103025">
    <property type="entry name" value="Folate-binding domain"/>
    <property type="match status" value="1"/>
</dbReference>
<accession>Q3B5U7</accession>
<gene>
    <name evidence="1" type="primary">gcvT</name>
    <name type="ordered locus">Plut_0396</name>
</gene>
<organism>
    <name type="scientific">Chlorobium luteolum (strain DSM 273 / BCRC 81028 / 2530)</name>
    <name type="common">Pelodictyon luteolum</name>
    <dbReference type="NCBI Taxonomy" id="319225"/>
    <lineage>
        <taxon>Bacteria</taxon>
        <taxon>Pseudomonadati</taxon>
        <taxon>Chlorobiota</taxon>
        <taxon>Chlorobiia</taxon>
        <taxon>Chlorobiales</taxon>
        <taxon>Chlorobiaceae</taxon>
        <taxon>Chlorobium/Pelodictyon group</taxon>
        <taxon>Pelodictyon</taxon>
    </lineage>
</organism>
<feature type="chain" id="PRO_1000047685" description="Aminomethyltransferase">
    <location>
        <begin position="1"/>
        <end position="365"/>
    </location>
</feature>
<protein>
    <recommendedName>
        <fullName evidence="1">Aminomethyltransferase</fullName>
        <ecNumber evidence="1">2.1.2.10</ecNumber>
    </recommendedName>
    <alternativeName>
        <fullName evidence="1">Glycine cleavage system T protein</fullName>
    </alternativeName>
</protein>
<evidence type="ECO:0000255" key="1">
    <source>
        <dbReference type="HAMAP-Rule" id="MF_00259"/>
    </source>
</evidence>
<reference key="1">
    <citation type="submission" date="2005-08" db="EMBL/GenBank/DDBJ databases">
        <title>Complete sequence of Pelodictyon luteolum DSM 273.</title>
        <authorList>
            <consortium name="US DOE Joint Genome Institute"/>
            <person name="Copeland A."/>
            <person name="Lucas S."/>
            <person name="Lapidus A."/>
            <person name="Barry K."/>
            <person name="Detter J.C."/>
            <person name="Glavina T."/>
            <person name="Hammon N."/>
            <person name="Israni S."/>
            <person name="Pitluck S."/>
            <person name="Bryant D."/>
            <person name="Schmutz J."/>
            <person name="Larimer F."/>
            <person name="Land M."/>
            <person name="Kyrpides N."/>
            <person name="Ivanova N."/>
            <person name="Richardson P."/>
        </authorList>
    </citation>
    <scope>NUCLEOTIDE SEQUENCE [LARGE SCALE GENOMIC DNA]</scope>
    <source>
        <strain>DSM 273 / BCRC 81028 / 2530</strain>
    </source>
</reference>
<keyword id="KW-0032">Aminotransferase</keyword>
<keyword id="KW-1185">Reference proteome</keyword>
<keyword id="KW-0808">Transferase</keyword>